<accession>Q2YY14</accession>
<protein>
    <recommendedName>
        <fullName>Acylphosphatase</fullName>
        <ecNumber>3.6.1.7</ecNumber>
    </recommendedName>
    <alternativeName>
        <fullName>Acylphosphate phosphohydrolase</fullName>
    </alternativeName>
</protein>
<feature type="chain" id="PRO_0000326808" description="Acylphosphatase">
    <location>
        <begin position="1"/>
        <end position="89"/>
    </location>
</feature>
<feature type="domain" description="Acylphosphatase-like" evidence="1">
    <location>
        <begin position="3"/>
        <end position="89"/>
    </location>
</feature>
<feature type="active site" evidence="1">
    <location>
        <position position="18"/>
    </location>
</feature>
<feature type="active site" evidence="1">
    <location>
        <position position="36"/>
    </location>
</feature>
<sequence length="89" mass="10160">MRHIHLQVFGRVQGVGFRYFTQRIAMNYNIVGTVQNVDDYVEIYAQGDDADIERFIQGVIEGASPASNVTSHQLEELELNQKLSDFRSI</sequence>
<comment type="catalytic activity">
    <reaction>
        <text>an acyl phosphate + H2O = a carboxylate + phosphate + H(+)</text>
        <dbReference type="Rhea" id="RHEA:14965"/>
        <dbReference type="ChEBI" id="CHEBI:15377"/>
        <dbReference type="ChEBI" id="CHEBI:15378"/>
        <dbReference type="ChEBI" id="CHEBI:29067"/>
        <dbReference type="ChEBI" id="CHEBI:43474"/>
        <dbReference type="ChEBI" id="CHEBI:59918"/>
        <dbReference type="EC" id="3.6.1.7"/>
    </reaction>
</comment>
<comment type="similarity">
    <text evidence="2">Belongs to the acylphosphatase family.</text>
</comment>
<organism>
    <name type="scientific">Staphylococcus aureus (strain bovine RF122 / ET3-1)</name>
    <dbReference type="NCBI Taxonomy" id="273036"/>
    <lineage>
        <taxon>Bacteria</taxon>
        <taxon>Bacillati</taxon>
        <taxon>Bacillota</taxon>
        <taxon>Bacilli</taxon>
        <taxon>Bacillales</taxon>
        <taxon>Staphylococcaceae</taxon>
        <taxon>Staphylococcus</taxon>
    </lineage>
</organism>
<gene>
    <name type="primary">acyP</name>
    <name type="ordered locus">SAB1260</name>
</gene>
<keyword id="KW-0378">Hydrolase</keyword>
<name>ACYP_STAAB</name>
<evidence type="ECO:0000255" key="1">
    <source>
        <dbReference type="PROSITE-ProRule" id="PRU00520"/>
    </source>
</evidence>
<evidence type="ECO:0000305" key="2"/>
<proteinExistence type="inferred from homology"/>
<dbReference type="EC" id="3.6.1.7"/>
<dbReference type="EMBL" id="AJ938182">
    <property type="protein sequence ID" value="CAI80949.1"/>
    <property type="molecule type" value="Genomic_DNA"/>
</dbReference>
<dbReference type="RefSeq" id="WP_001215907.1">
    <property type="nucleotide sequence ID" value="NC_007622.1"/>
</dbReference>
<dbReference type="SMR" id="Q2YY14"/>
<dbReference type="KEGG" id="sab:SAB1260"/>
<dbReference type="HOGENOM" id="CLU_141932_2_1_9"/>
<dbReference type="GO" id="GO:0003998">
    <property type="term" value="F:acylphosphatase activity"/>
    <property type="evidence" value="ECO:0007669"/>
    <property type="project" value="UniProtKB-EC"/>
</dbReference>
<dbReference type="GO" id="GO:0016743">
    <property type="term" value="F:carboxyl- or carbamoyltransferase activity"/>
    <property type="evidence" value="ECO:0007669"/>
    <property type="project" value="TreeGrafter"/>
</dbReference>
<dbReference type="GO" id="GO:0008270">
    <property type="term" value="F:zinc ion binding"/>
    <property type="evidence" value="ECO:0007669"/>
    <property type="project" value="TreeGrafter"/>
</dbReference>
<dbReference type="GO" id="GO:0051604">
    <property type="term" value="P:protein maturation"/>
    <property type="evidence" value="ECO:0007669"/>
    <property type="project" value="TreeGrafter"/>
</dbReference>
<dbReference type="Gene3D" id="3.30.70.100">
    <property type="match status" value="1"/>
</dbReference>
<dbReference type="InterPro" id="IPR001792">
    <property type="entry name" value="Acylphosphatase-like_dom"/>
</dbReference>
<dbReference type="InterPro" id="IPR036046">
    <property type="entry name" value="Acylphosphatase-like_dom_sf"/>
</dbReference>
<dbReference type="InterPro" id="IPR017968">
    <property type="entry name" value="Acylphosphatase_CS"/>
</dbReference>
<dbReference type="InterPro" id="IPR051060">
    <property type="entry name" value="Carbamoyltrans_HypF-like"/>
</dbReference>
<dbReference type="NCBIfam" id="NF011005">
    <property type="entry name" value="PRK14431.1"/>
    <property type="match status" value="1"/>
</dbReference>
<dbReference type="PANTHER" id="PTHR42959">
    <property type="entry name" value="CARBAMOYLTRANSFERASE"/>
    <property type="match status" value="1"/>
</dbReference>
<dbReference type="PANTHER" id="PTHR42959:SF1">
    <property type="entry name" value="CARBAMOYLTRANSFERASE HYPF"/>
    <property type="match status" value="1"/>
</dbReference>
<dbReference type="Pfam" id="PF00708">
    <property type="entry name" value="Acylphosphatase"/>
    <property type="match status" value="1"/>
</dbReference>
<dbReference type="SUPFAM" id="SSF54975">
    <property type="entry name" value="Acylphosphatase/BLUF domain-like"/>
    <property type="match status" value="1"/>
</dbReference>
<dbReference type="PROSITE" id="PS00150">
    <property type="entry name" value="ACYLPHOSPHATASE_1"/>
    <property type="match status" value="1"/>
</dbReference>
<dbReference type="PROSITE" id="PS51160">
    <property type="entry name" value="ACYLPHOSPHATASE_3"/>
    <property type="match status" value="1"/>
</dbReference>
<reference key="1">
    <citation type="journal article" date="2007" name="PLoS ONE">
        <title>Molecular correlates of host specialization in Staphylococcus aureus.</title>
        <authorList>
            <person name="Herron-Olson L."/>
            <person name="Fitzgerald J.R."/>
            <person name="Musser J.M."/>
            <person name="Kapur V."/>
        </authorList>
    </citation>
    <scope>NUCLEOTIDE SEQUENCE [LARGE SCALE GENOMIC DNA]</scope>
    <source>
        <strain>bovine RF122 / ET3-1</strain>
    </source>
</reference>